<organism>
    <name type="scientific">Homo sapiens</name>
    <name type="common">Human</name>
    <dbReference type="NCBI Taxonomy" id="9606"/>
    <lineage>
        <taxon>Eukaryota</taxon>
        <taxon>Metazoa</taxon>
        <taxon>Chordata</taxon>
        <taxon>Craniata</taxon>
        <taxon>Vertebrata</taxon>
        <taxon>Euteleostomi</taxon>
        <taxon>Mammalia</taxon>
        <taxon>Eutheria</taxon>
        <taxon>Euarchontoglires</taxon>
        <taxon>Primates</taxon>
        <taxon>Haplorrhini</taxon>
        <taxon>Catarrhini</taxon>
        <taxon>Hominidae</taxon>
        <taxon>Homo</taxon>
    </lineage>
</organism>
<protein>
    <recommendedName>
        <fullName>Dual specificity protein phosphatase 3</fullName>
        <ecNumber>3.1.3.16</ecNumber>
        <ecNumber>3.1.3.48</ecNumber>
    </recommendedName>
    <alternativeName>
        <fullName>Dual specificity protein phosphatase VHR</fullName>
    </alternativeName>
    <alternativeName>
        <fullName>Vaccinia H1-related phosphatase</fullName>
        <shortName>VHR</shortName>
    </alternativeName>
</protein>
<dbReference type="EC" id="3.1.3.16"/>
<dbReference type="EC" id="3.1.3.48"/>
<dbReference type="EMBL" id="L05147">
    <property type="protein sequence ID" value="AAA35777.1"/>
    <property type="molecule type" value="mRNA"/>
</dbReference>
<dbReference type="EMBL" id="BT019522">
    <property type="protein sequence ID" value="AAV38329.1"/>
    <property type="molecule type" value="mRNA"/>
</dbReference>
<dbReference type="EMBL" id="CH471178">
    <property type="protein sequence ID" value="EAW51667.1"/>
    <property type="molecule type" value="Genomic_DNA"/>
</dbReference>
<dbReference type="EMBL" id="CH471178">
    <property type="protein sequence ID" value="EAW51668.1"/>
    <property type="molecule type" value="Genomic_DNA"/>
</dbReference>
<dbReference type="EMBL" id="BC002682">
    <property type="protein sequence ID" value="AAH02682.1"/>
    <property type="molecule type" value="mRNA"/>
</dbReference>
<dbReference type="EMBL" id="BC035701">
    <property type="protein sequence ID" value="AAH35701.1"/>
    <property type="molecule type" value="mRNA"/>
</dbReference>
<dbReference type="EMBL" id="AC003098">
    <property type="status" value="NOT_ANNOTATED_CDS"/>
    <property type="molecule type" value="Genomic_DNA"/>
</dbReference>
<dbReference type="EMBL" id="AC055813">
    <property type="status" value="NOT_ANNOTATED_CDS"/>
    <property type="molecule type" value="Genomic_DNA"/>
</dbReference>
<dbReference type="CCDS" id="CCDS11469.1">
    <molecule id="P51452-1"/>
</dbReference>
<dbReference type="PIR" id="A47196">
    <property type="entry name" value="A47196"/>
</dbReference>
<dbReference type="RefSeq" id="NP_004081.1">
    <molecule id="P51452-1"/>
    <property type="nucleotide sequence ID" value="NM_004090.4"/>
</dbReference>
<dbReference type="PDB" id="1J4X">
    <property type="method" value="X-ray"/>
    <property type="resolution" value="2.75 A"/>
    <property type="chains" value="A=2-185"/>
</dbReference>
<dbReference type="PDB" id="1VHR">
    <property type="method" value="X-ray"/>
    <property type="resolution" value="2.10 A"/>
    <property type="chains" value="A/B=2-185"/>
</dbReference>
<dbReference type="PDB" id="3F81">
    <property type="method" value="X-ray"/>
    <property type="resolution" value="1.90 A"/>
    <property type="chains" value="A/B=3-185"/>
</dbReference>
<dbReference type="PDB" id="8TK2">
    <property type="method" value="X-ray"/>
    <property type="resolution" value="1.70 A"/>
    <property type="chains" value="A/B=3-185"/>
</dbReference>
<dbReference type="PDB" id="8TK3">
    <property type="method" value="X-ray"/>
    <property type="resolution" value="2.00 A"/>
    <property type="chains" value="A=3-185"/>
</dbReference>
<dbReference type="PDB" id="8TK4">
    <property type="method" value="X-ray"/>
    <property type="resolution" value="1.80 A"/>
    <property type="chains" value="A=3-185"/>
</dbReference>
<dbReference type="PDB" id="8TK5">
    <property type="method" value="X-ray"/>
    <property type="resolution" value="1.90 A"/>
    <property type="chains" value="A/B=3-185"/>
</dbReference>
<dbReference type="PDB" id="8TK6">
    <property type="method" value="X-ray"/>
    <property type="resolution" value="1.65 A"/>
    <property type="chains" value="A/B=3-185"/>
</dbReference>
<dbReference type="PDB" id="9DJ9">
    <property type="method" value="X-ray"/>
    <property type="resolution" value="1.92 A"/>
    <property type="chains" value="A=1-185"/>
</dbReference>
<dbReference type="PDBsum" id="1J4X"/>
<dbReference type="PDBsum" id="1VHR"/>
<dbReference type="PDBsum" id="3F81"/>
<dbReference type="PDBsum" id="8TK2"/>
<dbReference type="PDBsum" id="8TK3"/>
<dbReference type="PDBsum" id="8TK4"/>
<dbReference type="PDBsum" id="8TK5"/>
<dbReference type="PDBsum" id="8TK6"/>
<dbReference type="PDBsum" id="9DJ9"/>
<dbReference type="SMR" id="P51452"/>
<dbReference type="BioGRID" id="108178">
    <property type="interactions" value="76"/>
</dbReference>
<dbReference type="FunCoup" id="P51452">
    <property type="interactions" value="1724"/>
</dbReference>
<dbReference type="IntAct" id="P51452">
    <property type="interactions" value="56"/>
</dbReference>
<dbReference type="MINT" id="P51452"/>
<dbReference type="STRING" id="9606.ENSP00000226004"/>
<dbReference type="BindingDB" id="P51452"/>
<dbReference type="ChEMBL" id="CHEMBL2635"/>
<dbReference type="DEPOD" id="DUSP3"/>
<dbReference type="GlyGen" id="P51452">
    <property type="glycosylation" value="2 sites, 1 N-linked glycan (1 site), 1 O-linked glycan (1 site)"/>
</dbReference>
<dbReference type="iPTMnet" id="P51452"/>
<dbReference type="PhosphoSitePlus" id="P51452"/>
<dbReference type="SwissPalm" id="P51452"/>
<dbReference type="BioMuta" id="DUSP3"/>
<dbReference type="DMDM" id="1718191"/>
<dbReference type="jPOST" id="P51452"/>
<dbReference type="MassIVE" id="P51452"/>
<dbReference type="PaxDb" id="9606-ENSP00000226004"/>
<dbReference type="PeptideAtlas" id="P51452"/>
<dbReference type="ProteomicsDB" id="56308">
    <molecule id="P51452-1"/>
</dbReference>
<dbReference type="ProteomicsDB" id="71190"/>
<dbReference type="Pumba" id="P51452"/>
<dbReference type="Antibodypedia" id="29589">
    <property type="antibodies" value="323 antibodies from 33 providers"/>
</dbReference>
<dbReference type="DNASU" id="1845"/>
<dbReference type="Ensembl" id="ENST00000226004.8">
    <molecule id="P51452-1"/>
    <property type="protein sequence ID" value="ENSP00000226004.2"/>
    <property type="gene ID" value="ENSG00000108861.9"/>
</dbReference>
<dbReference type="GeneID" id="1845"/>
<dbReference type="KEGG" id="hsa:1845"/>
<dbReference type="MANE-Select" id="ENST00000226004.8">
    <property type="protein sequence ID" value="ENSP00000226004.2"/>
    <property type="RefSeq nucleotide sequence ID" value="NM_004090.4"/>
    <property type="RefSeq protein sequence ID" value="NP_004081.1"/>
</dbReference>
<dbReference type="UCSC" id="uc002ied.5">
    <molecule id="P51452-1"/>
    <property type="organism name" value="human"/>
</dbReference>
<dbReference type="AGR" id="HGNC:3069"/>
<dbReference type="CTD" id="1845"/>
<dbReference type="DisGeNET" id="1845"/>
<dbReference type="GeneCards" id="DUSP3"/>
<dbReference type="HGNC" id="HGNC:3069">
    <property type="gene designation" value="DUSP3"/>
</dbReference>
<dbReference type="HPA" id="ENSG00000108861">
    <property type="expression patterns" value="Tissue enhanced (skeletal)"/>
</dbReference>
<dbReference type="MIM" id="600183">
    <property type="type" value="gene"/>
</dbReference>
<dbReference type="neXtProt" id="NX_P51452"/>
<dbReference type="OpenTargets" id="ENSG00000108861"/>
<dbReference type="PharmGKB" id="PA27526"/>
<dbReference type="VEuPathDB" id="HostDB:ENSG00000108861"/>
<dbReference type="eggNOG" id="KOG1716">
    <property type="taxonomic scope" value="Eukaryota"/>
</dbReference>
<dbReference type="GeneTree" id="ENSGT00940000163612"/>
<dbReference type="HOGENOM" id="CLU_027074_11_3_1"/>
<dbReference type="InParanoid" id="P51452"/>
<dbReference type="OMA" id="RHKMDVK"/>
<dbReference type="OrthoDB" id="253091at2759"/>
<dbReference type="PAN-GO" id="P51452">
    <property type="GO annotations" value="9 GO annotations based on evolutionary models"/>
</dbReference>
<dbReference type="PhylomeDB" id="P51452"/>
<dbReference type="TreeFam" id="TF105128"/>
<dbReference type="BRENDA" id="3.1.3.16">
    <property type="organism ID" value="2681"/>
</dbReference>
<dbReference type="BRENDA" id="3.1.3.48">
    <property type="organism ID" value="2681"/>
</dbReference>
<dbReference type="PathwayCommons" id="P51452"/>
<dbReference type="Reactome" id="R-HSA-202670">
    <property type="pathway name" value="ERKs are inactivated"/>
</dbReference>
<dbReference type="SignaLink" id="P51452"/>
<dbReference type="SIGNOR" id="P51452"/>
<dbReference type="BioGRID-ORCS" id="1845">
    <property type="hits" value="13 hits in 1179 CRISPR screens"/>
</dbReference>
<dbReference type="CD-CODE" id="DEE660B4">
    <property type="entry name" value="Stress granule"/>
</dbReference>
<dbReference type="CD-CODE" id="FB4E32DD">
    <property type="entry name" value="Presynaptic clusters and postsynaptic densities"/>
</dbReference>
<dbReference type="ChiTaRS" id="DUSP3">
    <property type="organism name" value="human"/>
</dbReference>
<dbReference type="EvolutionaryTrace" id="P51452"/>
<dbReference type="GeneWiki" id="DUSP3"/>
<dbReference type="GenomeRNAi" id="1845"/>
<dbReference type="Pharos" id="P51452">
    <property type="development level" value="Tchem"/>
</dbReference>
<dbReference type="PRO" id="PR:P51452"/>
<dbReference type="Proteomes" id="UP000005640">
    <property type="component" value="Chromosome 17"/>
</dbReference>
<dbReference type="RNAct" id="P51452">
    <property type="molecule type" value="protein"/>
</dbReference>
<dbReference type="Bgee" id="ENSG00000108861">
    <property type="expression patterns" value="Expressed in skeletal muscle tissue of rectus abdominis and 214 other cell types or tissues"/>
</dbReference>
<dbReference type="ExpressionAtlas" id="P51452">
    <property type="expression patterns" value="baseline and differential"/>
</dbReference>
<dbReference type="GO" id="GO:0005737">
    <property type="term" value="C:cytoplasm"/>
    <property type="evidence" value="ECO:0000318"/>
    <property type="project" value="GO_Central"/>
</dbReference>
<dbReference type="GO" id="GO:0005856">
    <property type="term" value="C:cytoskeleton"/>
    <property type="evidence" value="ECO:0007669"/>
    <property type="project" value="UniProtKB-KW"/>
</dbReference>
<dbReference type="GO" id="GO:0005829">
    <property type="term" value="C:cytosol"/>
    <property type="evidence" value="ECO:0000314"/>
    <property type="project" value="HPA"/>
</dbReference>
<dbReference type="GO" id="GO:0001772">
    <property type="term" value="C:immunological synapse"/>
    <property type="evidence" value="ECO:0000314"/>
    <property type="project" value="UniProtKB"/>
</dbReference>
<dbReference type="GO" id="GO:0031514">
    <property type="term" value="C:motile cilium"/>
    <property type="evidence" value="ECO:0007669"/>
    <property type="project" value="UniProtKB-KW"/>
</dbReference>
<dbReference type="GO" id="GO:0005654">
    <property type="term" value="C:nucleoplasm"/>
    <property type="evidence" value="ECO:0000314"/>
    <property type="project" value="HPA"/>
</dbReference>
<dbReference type="GO" id="GO:0005634">
    <property type="term" value="C:nucleus"/>
    <property type="evidence" value="ECO:0000314"/>
    <property type="project" value="UniProtKB"/>
</dbReference>
<dbReference type="GO" id="GO:0008092">
    <property type="term" value="F:cytoskeletal protein binding"/>
    <property type="evidence" value="ECO:0000353"/>
    <property type="project" value="BHF-UCL"/>
</dbReference>
<dbReference type="GO" id="GO:0033549">
    <property type="term" value="F:MAP kinase phosphatase activity"/>
    <property type="evidence" value="ECO:0000315"/>
    <property type="project" value="UniProtKB"/>
</dbReference>
<dbReference type="GO" id="GO:0016791">
    <property type="term" value="F:phosphatase activity"/>
    <property type="evidence" value="ECO:0000314"/>
    <property type="project" value="UniProtKB"/>
</dbReference>
<dbReference type="GO" id="GO:0019901">
    <property type="term" value="F:protein kinase binding"/>
    <property type="evidence" value="ECO:0000314"/>
    <property type="project" value="MGI"/>
</dbReference>
<dbReference type="GO" id="GO:0004722">
    <property type="term" value="F:protein serine/threonine phosphatase activity"/>
    <property type="evidence" value="ECO:0007669"/>
    <property type="project" value="UniProtKB-EC"/>
</dbReference>
<dbReference type="GO" id="GO:1990782">
    <property type="term" value="F:protein tyrosine kinase binding"/>
    <property type="evidence" value="ECO:0000353"/>
    <property type="project" value="BHF-UCL"/>
</dbReference>
<dbReference type="GO" id="GO:0004725">
    <property type="term" value="F:protein tyrosine phosphatase activity"/>
    <property type="evidence" value="ECO:0000314"/>
    <property type="project" value="UniProtKB"/>
</dbReference>
<dbReference type="GO" id="GO:0008138">
    <property type="term" value="F:protein tyrosine/serine/threonine phosphatase activity"/>
    <property type="evidence" value="ECO:0000314"/>
    <property type="project" value="UniProtKB"/>
</dbReference>
<dbReference type="GO" id="GO:0030294">
    <property type="term" value="F:receptor signaling protein tyrosine kinase inhibitor activity"/>
    <property type="evidence" value="ECO:0000250"/>
    <property type="project" value="BHF-UCL"/>
</dbReference>
<dbReference type="GO" id="GO:0030971">
    <property type="term" value="F:receptor tyrosine kinase binding"/>
    <property type="evidence" value="ECO:0000353"/>
    <property type="project" value="BHF-UCL"/>
</dbReference>
<dbReference type="GO" id="GO:0071364">
    <property type="term" value="P:cellular response to epidermal growth factor stimulus"/>
    <property type="evidence" value="ECO:0000315"/>
    <property type="project" value="BHF-UCL"/>
</dbReference>
<dbReference type="GO" id="GO:0016311">
    <property type="term" value="P:dephosphorylation"/>
    <property type="evidence" value="ECO:0000314"/>
    <property type="project" value="UniProtKB"/>
</dbReference>
<dbReference type="GO" id="GO:0030336">
    <property type="term" value="P:negative regulation of cell migration"/>
    <property type="evidence" value="ECO:0000315"/>
    <property type="project" value="BHF-UCL"/>
</dbReference>
<dbReference type="GO" id="GO:0050922">
    <property type="term" value="P:negative regulation of chemotaxis"/>
    <property type="evidence" value="ECO:0000315"/>
    <property type="project" value="BHF-UCL"/>
</dbReference>
<dbReference type="GO" id="GO:0042059">
    <property type="term" value="P:negative regulation of epidermal growth factor receptor signaling pathway"/>
    <property type="evidence" value="ECO:0000250"/>
    <property type="project" value="BHF-UCL"/>
</dbReference>
<dbReference type="GO" id="GO:0070373">
    <property type="term" value="P:negative regulation of ERK1 and ERK2 cascade"/>
    <property type="evidence" value="ECO:0000314"/>
    <property type="project" value="UniProtKB"/>
</dbReference>
<dbReference type="GO" id="GO:0046329">
    <property type="term" value="P:negative regulation of JNK cascade"/>
    <property type="evidence" value="ECO:0000314"/>
    <property type="project" value="UniProtKB"/>
</dbReference>
<dbReference type="GO" id="GO:0043409">
    <property type="term" value="P:negative regulation of MAPK cascade"/>
    <property type="evidence" value="ECO:0000315"/>
    <property type="project" value="UniProtKB"/>
</dbReference>
<dbReference type="GO" id="GO:0050868">
    <property type="term" value="P:negative regulation of T cell activation"/>
    <property type="evidence" value="ECO:0000314"/>
    <property type="project" value="UniProtKB"/>
</dbReference>
<dbReference type="GO" id="GO:0050860">
    <property type="term" value="P:negative regulation of T cell receptor signaling pathway"/>
    <property type="evidence" value="ECO:0000314"/>
    <property type="project" value="UniProtKB"/>
</dbReference>
<dbReference type="GO" id="GO:0035335">
    <property type="term" value="P:peptidyl-tyrosine dephosphorylation"/>
    <property type="evidence" value="ECO:0000314"/>
    <property type="project" value="UniProtKB"/>
</dbReference>
<dbReference type="GO" id="GO:0120183">
    <property type="term" value="P:positive regulation of focal adhesion disassembly"/>
    <property type="evidence" value="ECO:0000315"/>
    <property type="project" value="BHF-UCL"/>
</dbReference>
<dbReference type="GO" id="GO:0045931">
    <property type="term" value="P:positive regulation of mitotic cell cycle"/>
    <property type="evidence" value="ECO:0000315"/>
    <property type="project" value="UniProtKB"/>
</dbReference>
<dbReference type="GO" id="GO:0051893">
    <property type="term" value="P:regulation of focal adhesion assembly"/>
    <property type="evidence" value="ECO:0000315"/>
    <property type="project" value="BHF-UCL"/>
</dbReference>
<dbReference type="CDD" id="cd14579">
    <property type="entry name" value="DUSP3"/>
    <property type="match status" value="1"/>
</dbReference>
<dbReference type="FunFam" id="3.90.190.10:FF:000065">
    <property type="entry name" value="Dual specificity protein phosphatase 3"/>
    <property type="match status" value="1"/>
</dbReference>
<dbReference type="Gene3D" id="3.90.190.10">
    <property type="entry name" value="Protein tyrosine phosphatase superfamily"/>
    <property type="match status" value="1"/>
</dbReference>
<dbReference type="InterPro" id="IPR020405">
    <property type="entry name" value="Atypical_DUSP_subfamA"/>
</dbReference>
<dbReference type="InterPro" id="IPR000340">
    <property type="entry name" value="Dual-sp_phosphatase_cat-dom"/>
</dbReference>
<dbReference type="InterPro" id="IPR029021">
    <property type="entry name" value="Prot-tyrosine_phosphatase-like"/>
</dbReference>
<dbReference type="InterPro" id="IPR016130">
    <property type="entry name" value="Tyr_Pase_AS"/>
</dbReference>
<dbReference type="InterPro" id="IPR000387">
    <property type="entry name" value="Tyr_Pase_dom"/>
</dbReference>
<dbReference type="InterPro" id="IPR020422">
    <property type="entry name" value="TYR_PHOSPHATASE_DUAL_dom"/>
</dbReference>
<dbReference type="PANTHER" id="PTHR45682">
    <property type="entry name" value="AGAP008228-PA"/>
    <property type="match status" value="1"/>
</dbReference>
<dbReference type="PANTHER" id="PTHR45682:SF1">
    <property type="entry name" value="DUAL SPECIFICITY PROTEIN PHOSPHATASE 3"/>
    <property type="match status" value="1"/>
</dbReference>
<dbReference type="Pfam" id="PF00782">
    <property type="entry name" value="DSPc"/>
    <property type="match status" value="1"/>
</dbReference>
<dbReference type="PRINTS" id="PR01908">
    <property type="entry name" value="ADSPHPHTASE"/>
</dbReference>
<dbReference type="PRINTS" id="PR01909">
    <property type="entry name" value="ADSPHPHTASEA"/>
</dbReference>
<dbReference type="SMART" id="SM00195">
    <property type="entry name" value="DSPc"/>
    <property type="match status" value="1"/>
</dbReference>
<dbReference type="SUPFAM" id="SSF52799">
    <property type="entry name" value="(Phosphotyrosine protein) phosphatases II"/>
    <property type="match status" value="1"/>
</dbReference>
<dbReference type="PROSITE" id="PS00383">
    <property type="entry name" value="TYR_PHOSPHATASE_1"/>
    <property type="match status" value="1"/>
</dbReference>
<dbReference type="PROSITE" id="PS50056">
    <property type="entry name" value="TYR_PHOSPHATASE_2"/>
    <property type="match status" value="1"/>
</dbReference>
<dbReference type="PROSITE" id="PS50054">
    <property type="entry name" value="TYR_PHOSPHATASE_DUAL"/>
    <property type="match status" value="1"/>
</dbReference>
<gene>
    <name type="primary">DUSP3</name>
    <name type="synonym">VHR</name>
</gene>
<reference key="1">
    <citation type="journal article" date="1992" name="Proc. Natl. Acad. Sci. U.S.A.">
        <title>Expression cloning of a human dual-specificity phosphatase.</title>
        <authorList>
            <person name="Ishibashi T."/>
            <person name="Bottaro D.P."/>
            <person name="Chan A."/>
            <person name="Miki T."/>
            <person name="Aaronson S.A."/>
        </authorList>
    </citation>
    <scope>NUCLEOTIDE SEQUENCE [MRNA] (ISOFORM 1)</scope>
</reference>
<reference key="2">
    <citation type="submission" date="2004-10" db="EMBL/GenBank/DDBJ databases">
        <title>Cloning of human full-length CDSs in BD Creator(TM) system donor vector.</title>
        <authorList>
            <person name="Kalnine N."/>
            <person name="Chen X."/>
            <person name="Rolfs A."/>
            <person name="Halleck A."/>
            <person name="Hines L."/>
            <person name="Eisenstein S."/>
            <person name="Koundinya M."/>
            <person name="Raphael J."/>
            <person name="Moreira D."/>
            <person name="Kelley T."/>
            <person name="LaBaer J."/>
            <person name="Lin Y."/>
            <person name="Phelan M."/>
            <person name="Farmer A."/>
        </authorList>
    </citation>
    <scope>NUCLEOTIDE SEQUENCE [LARGE SCALE MRNA] (ISOFORM 1)</scope>
</reference>
<reference key="3">
    <citation type="journal article" date="2006" name="Nature">
        <title>DNA sequence of human chromosome 17 and analysis of rearrangement in the human lineage.</title>
        <authorList>
            <person name="Zody M.C."/>
            <person name="Garber M."/>
            <person name="Adams D.J."/>
            <person name="Sharpe T."/>
            <person name="Harrow J."/>
            <person name="Lupski J.R."/>
            <person name="Nicholson C."/>
            <person name="Searle S.M."/>
            <person name="Wilming L."/>
            <person name="Young S.K."/>
            <person name="Abouelleil A."/>
            <person name="Allen N.R."/>
            <person name="Bi W."/>
            <person name="Bloom T."/>
            <person name="Borowsky M.L."/>
            <person name="Bugalter B.E."/>
            <person name="Butler J."/>
            <person name="Chang J.L."/>
            <person name="Chen C.-K."/>
            <person name="Cook A."/>
            <person name="Corum B."/>
            <person name="Cuomo C.A."/>
            <person name="de Jong P.J."/>
            <person name="DeCaprio D."/>
            <person name="Dewar K."/>
            <person name="FitzGerald M."/>
            <person name="Gilbert J."/>
            <person name="Gibson R."/>
            <person name="Gnerre S."/>
            <person name="Goldstein S."/>
            <person name="Grafham D.V."/>
            <person name="Grocock R."/>
            <person name="Hafez N."/>
            <person name="Hagopian D.S."/>
            <person name="Hart E."/>
            <person name="Norman C.H."/>
            <person name="Humphray S."/>
            <person name="Jaffe D.B."/>
            <person name="Jones M."/>
            <person name="Kamal M."/>
            <person name="Khodiyar V.K."/>
            <person name="LaButti K."/>
            <person name="Laird G."/>
            <person name="Lehoczky J."/>
            <person name="Liu X."/>
            <person name="Lokyitsang T."/>
            <person name="Loveland J."/>
            <person name="Lui A."/>
            <person name="Macdonald P."/>
            <person name="Major J.E."/>
            <person name="Matthews L."/>
            <person name="Mauceli E."/>
            <person name="McCarroll S.A."/>
            <person name="Mihalev A.H."/>
            <person name="Mudge J."/>
            <person name="Nguyen C."/>
            <person name="Nicol R."/>
            <person name="O'Leary S.B."/>
            <person name="Osoegawa K."/>
            <person name="Schwartz D.C."/>
            <person name="Shaw-Smith C."/>
            <person name="Stankiewicz P."/>
            <person name="Steward C."/>
            <person name="Swarbreck D."/>
            <person name="Venkataraman V."/>
            <person name="Whittaker C.A."/>
            <person name="Yang X."/>
            <person name="Zimmer A.R."/>
            <person name="Bradley A."/>
            <person name="Hubbard T."/>
            <person name="Birren B.W."/>
            <person name="Rogers J."/>
            <person name="Lander E.S."/>
            <person name="Nusbaum C."/>
        </authorList>
    </citation>
    <scope>NUCLEOTIDE SEQUENCE [LARGE SCALE GENOMIC DNA]</scope>
</reference>
<reference key="4">
    <citation type="submission" date="2005-09" db="EMBL/GenBank/DDBJ databases">
        <authorList>
            <person name="Mural R.J."/>
            <person name="Istrail S."/>
            <person name="Sutton G.G."/>
            <person name="Florea L."/>
            <person name="Halpern A.L."/>
            <person name="Mobarry C.M."/>
            <person name="Lippert R."/>
            <person name="Walenz B."/>
            <person name="Shatkay H."/>
            <person name="Dew I."/>
            <person name="Miller J.R."/>
            <person name="Flanigan M.J."/>
            <person name="Edwards N.J."/>
            <person name="Bolanos R."/>
            <person name="Fasulo D."/>
            <person name="Halldorsson B.V."/>
            <person name="Hannenhalli S."/>
            <person name="Turner R."/>
            <person name="Yooseph S."/>
            <person name="Lu F."/>
            <person name="Nusskern D.R."/>
            <person name="Shue B.C."/>
            <person name="Zheng X.H."/>
            <person name="Zhong F."/>
            <person name="Delcher A.L."/>
            <person name="Huson D.H."/>
            <person name="Kravitz S.A."/>
            <person name="Mouchard L."/>
            <person name="Reinert K."/>
            <person name="Remington K.A."/>
            <person name="Clark A.G."/>
            <person name="Waterman M.S."/>
            <person name="Eichler E.E."/>
            <person name="Adams M.D."/>
            <person name="Hunkapiller M.W."/>
            <person name="Myers E.W."/>
            <person name="Venter J.C."/>
        </authorList>
    </citation>
    <scope>NUCLEOTIDE SEQUENCE [LARGE SCALE GENOMIC DNA]</scope>
</reference>
<reference key="5">
    <citation type="journal article" date="2004" name="Genome Res.">
        <title>The status, quality, and expansion of the NIH full-length cDNA project: the Mammalian Gene Collection (MGC).</title>
        <authorList>
            <consortium name="The MGC Project Team"/>
        </authorList>
    </citation>
    <scope>NUCLEOTIDE SEQUENCE [LARGE SCALE MRNA] (ISOFORMS 1 AND 2)</scope>
    <source>
        <tissue>Duodenum</tissue>
        <tissue>Uterus</tissue>
    </source>
</reference>
<reference key="6">
    <citation type="journal article" date="1999" name="J. Biol. Chem.">
        <title>Extracellular regulated kinases (ERK) 1 and ERK2 are authentic substrates for the dual-specificity protein-tyrosine phosphatase VHR. A novel role in down-regulating the ERK pathway.</title>
        <authorList>
            <person name="Todd J.L."/>
            <person name="Tanner K.G."/>
            <person name="Denu J.M."/>
        </authorList>
    </citation>
    <scope>FUNCTION</scope>
    <scope>CATALYTIC ACTIVITY</scope>
    <scope>SUBCELLULAR LOCATION</scope>
</reference>
<reference key="7">
    <citation type="journal article" date="2011" name="BMC Syst. Biol.">
        <title>Initial characterization of the human central proteome.</title>
        <authorList>
            <person name="Burkard T.R."/>
            <person name="Planyavsky M."/>
            <person name="Kaupe I."/>
            <person name="Breitwieser F.P."/>
            <person name="Buerckstuemmer T."/>
            <person name="Bennett K.L."/>
            <person name="Superti-Furga G."/>
            <person name="Colinge J."/>
        </authorList>
    </citation>
    <scope>IDENTIFICATION BY MASS SPECTROMETRY [LARGE SCALE ANALYSIS]</scope>
</reference>
<reference key="8">
    <citation type="journal article" date="2016" name="Sci. Rep.">
        <title>Stress-induced nuclear translocation of CDK5 suppresses neuronal death by downregulating ERK activation via VRK3 phosphorylation.</title>
        <authorList>
            <person name="Song H."/>
            <person name="Kim W."/>
            <person name="Choi J.H."/>
            <person name="Kim S.H."/>
            <person name="Lee D."/>
            <person name="Park C.H."/>
            <person name="Kim S."/>
            <person name="Kim D.Y."/>
            <person name="Kim K.T."/>
        </authorList>
    </citation>
    <scope>SUBCELLULAR LOCATION</scope>
    <scope>INTERACTION WITH VRK3</scope>
</reference>
<reference key="9">
    <citation type="journal article" date="2016" name="Sci. Rep.">
        <title>VRK3-mediated nuclear localization of HSP70 prevents glutamate excitotoxicity-induced apoptosis and Abeta accumulation via enhancement of ERK phosphatase VHR activity.</title>
        <authorList>
            <person name="Song H."/>
            <person name="Kim W."/>
            <person name="Kim S.H."/>
            <person name="Kim K.T."/>
        </authorList>
    </citation>
    <scope>INTERACTION WITH VRK3</scope>
</reference>
<reference key="10">
    <citation type="journal article" date="1996" name="Science">
        <title>Crystal structure of the dual specificity protein phosphatase VHR.</title>
        <authorList>
            <person name="Yuvaniyama J."/>
            <person name="Denu J.M."/>
            <person name="Dixon J.E."/>
            <person name="Saper M.A."/>
        </authorList>
    </citation>
    <scope>X-RAY CRYSTALLOGRAPHY (2.1 ANGSTROMS)</scope>
</reference>
<reference key="11">
    <citation type="journal article" date="2002" name="Biochemistry">
        <title>Structural basis for the recognition of a bisphosphorylated MAP kinase peptide by human VHR protein Phosphatase.</title>
        <authorList>
            <person name="Schumacher M.A."/>
            <person name="Todd J.L."/>
            <person name="Rice A.E."/>
            <person name="Tanner K.G."/>
            <person name="Denu J.M."/>
        </authorList>
    </citation>
    <scope>X-RAY CRYSTALLOGRAPHY (2.75 ANGSTROMS) OF 2-185</scope>
    <scope>FUNCTION</scope>
    <scope>CATALYTIC ACTIVITY</scope>
</reference>
<reference key="12">
    <citation type="journal article" date="2009" name="J. Med. Chem.">
        <title>Multidentate small-molecule inhibitors of vaccinia H1-related (VHR) phosphatase decrease proliferation of cervix cancer cells.</title>
        <authorList>
            <person name="Wu S."/>
            <person name="Vossius S."/>
            <person name="Rahmouni S."/>
            <person name="Miletic A.V."/>
            <person name="Vang T."/>
            <person name="Vazquez-Rodriguez J."/>
            <person name="Cerignoli F."/>
            <person name="Arimura Y."/>
            <person name="Williams S."/>
            <person name="Hayes T."/>
            <person name="Moutschen M."/>
            <person name="Vasile S."/>
            <person name="Pellecchia M."/>
            <person name="Mustelin T."/>
            <person name="Tautz L."/>
        </authorList>
    </citation>
    <scope>X-RAY CRYSTALLOGRAPHY (1.9 ANGSTROMS) OF 3-185</scope>
</reference>
<proteinExistence type="evidence at protein level"/>
<evidence type="ECO:0000250" key="1">
    <source>
        <dbReference type="UniProtKB" id="Q9D7X3"/>
    </source>
</evidence>
<evidence type="ECO:0000255" key="2">
    <source>
        <dbReference type="PROSITE-ProRule" id="PRU00160"/>
    </source>
</evidence>
<evidence type="ECO:0000255" key="3">
    <source>
        <dbReference type="PROSITE-ProRule" id="PRU10044"/>
    </source>
</evidence>
<evidence type="ECO:0000269" key="4">
    <source>
    </source>
</evidence>
<evidence type="ECO:0000269" key="5">
    <source>
    </source>
</evidence>
<evidence type="ECO:0000269" key="6">
    <source>
    </source>
</evidence>
<evidence type="ECO:0000269" key="7">
    <source>
    </source>
</evidence>
<evidence type="ECO:0000303" key="8">
    <source>
    </source>
</evidence>
<evidence type="ECO:0000305" key="9"/>
<evidence type="ECO:0007829" key="10">
    <source>
        <dbReference type="PDB" id="1J4X"/>
    </source>
</evidence>
<evidence type="ECO:0007829" key="11">
    <source>
        <dbReference type="PDB" id="8TK6"/>
    </source>
</evidence>
<name>DUS3_HUMAN</name>
<accession>P51452</accession>
<accession>D3DX45</accession>
<accession>Q5U0J1</accession>
<accession>Q8IYJ9</accession>
<comment type="function">
    <text evidence="4 5">Shows activity both for tyrosine-protein phosphate and serine-protein phosphate, but displays a strong preference toward phosphotyrosines (PubMed:10224087, PubMed:11863439). Specifically dephosphorylates and inactivates ERK1 and ERK2 (PubMed:10224087, PubMed:11863439).</text>
</comment>
<comment type="catalytic activity">
    <reaction evidence="3 4 5">
        <text>O-phospho-L-tyrosyl-[protein] + H2O = L-tyrosyl-[protein] + phosphate</text>
        <dbReference type="Rhea" id="RHEA:10684"/>
        <dbReference type="Rhea" id="RHEA-COMP:10136"/>
        <dbReference type="Rhea" id="RHEA-COMP:20101"/>
        <dbReference type="ChEBI" id="CHEBI:15377"/>
        <dbReference type="ChEBI" id="CHEBI:43474"/>
        <dbReference type="ChEBI" id="CHEBI:46858"/>
        <dbReference type="ChEBI" id="CHEBI:61978"/>
        <dbReference type="EC" id="3.1.3.48"/>
    </reaction>
</comment>
<comment type="catalytic activity">
    <reaction>
        <text>O-phospho-L-seryl-[protein] + H2O = L-seryl-[protein] + phosphate</text>
        <dbReference type="Rhea" id="RHEA:20629"/>
        <dbReference type="Rhea" id="RHEA-COMP:9863"/>
        <dbReference type="Rhea" id="RHEA-COMP:11604"/>
        <dbReference type="ChEBI" id="CHEBI:15377"/>
        <dbReference type="ChEBI" id="CHEBI:29999"/>
        <dbReference type="ChEBI" id="CHEBI:43474"/>
        <dbReference type="ChEBI" id="CHEBI:83421"/>
        <dbReference type="EC" id="3.1.3.16"/>
    </reaction>
</comment>
<comment type="catalytic activity">
    <reaction evidence="5">
        <text>O-phospho-L-threonyl-[protein] + H2O = L-threonyl-[protein] + phosphate</text>
        <dbReference type="Rhea" id="RHEA:47004"/>
        <dbReference type="Rhea" id="RHEA-COMP:11060"/>
        <dbReference type="Rhea" id="RHEA-COMP:11605"/>
        <dbReference type="ChEBI" id="CHEBI:15377"/>
        <dbReference type="ChEBI" id="CHEBI:30013"/>
        <dbReference type="ChEBI" id="CHEBI:43474"/>
        <dbReference type="ChEBI" id="CHEBI:61977"/>
        <dbReference type="EC" id="3.1.3.16"/>
    </reaction>
</comment>
<comment type="subunit">
    <text evidence="1 6 7">Microtubule inner protein component of sperm flagellar doublet microtubules (By similarity). Interacts with VRK3; this interaction activates DUSP3 phosphatase activity (PubMed:27346674, PubMed:27941812).</text>
</comment>
<comment type="interaction">
    <interactant intactId="EBI-1049755">
        <id>P51452</id>
    </interactant>
    <interactant intactId="EBI-2864512">
        <id>P50221</id>
        <label>MEOX1</label>
    </interactant>
    <organismsDiffer>false</organismsDiffer>
    <experiments>3</experiments>
</comment>
<comment type="subcellular location">
    <subcellularLocation>
        <location evidence="4 6">Nucleus</location>
    </subcellularLocation>
    <subcellularLocation>
        <location evidence="1">Cytoplasm</location>
        <location evidence="1">Cytoskeleton</location>
        <location evidence="1">Flagellum axoneme</location>
    </subcellularLocation>
</comment>
<comment type="alternative products">
    <event type="alternative splicing"/>
    <isoform>
        <id>P51452-1</id>
        <name>1</name>
        <sequence type="displayed"/>
    </isoform>
    <isoform>
        <id>P51452-2</id>
        <name>2</name>
        <sequence type="described" ref="VSP_056284"/>
    </isoform>
</comment>
<comment type="similarity">
    <text evidence="9">Belongs to the protein-tyrosine phosphatase family. Non-receptor class dual specificity subfamily.</text>
</comment>
<feature type="chain" id="PRO_0000094795" description="Dual specificity protein phosphatase 3">
    <location>
        <begin position="1"/>
        <end position="185"/>
    </location>
</feature>
<feature type="domain" description="Tyrosine-protein phosphatase" evidence="2">
    <location>
        <begin position="28"/>
        <end position="179"/>
    </location>
</feature>
<feature type="active site" description="Phosphocysteine intermediate" evidence="2">
    <location>
        <position position="124"/>
    </location>
</feature>
<feature type="splice variant" id="VSP_056284" description="In isoform 2." evidence="8">
    <original>MSGSFELSVQDLNDLLSDGSGCYSLPSQPCNEVTPRIYVGNA</original>
    <variation>M</variation>
    <location>
        <begin position="1"/>
        <end position="42"/>
    </location>
</feature>
<feature type="helix" evidence="11">
    <location>
        <begin position="6"/>
        <end position="16"/>
    </location>
</feature>
<feature type="strand" evidence="11">
    <location>
        <begin position="19"/>
        <end position="21"/>
    </location>
</feature>
<feature type="strand" evidence="11">
    <location>
        <begin position="27"/>
        <end position="34"/>
    </location>
</feature>
<feature type="strand" evidence="11">
    <location>
        <begin position="37"/>
        <end position="40"/>
    </location>
</feature>
<feature type="helix" evidence="11">
    <location>
        <begin position="42"/>
        <end position="45"/>
    </location>
</feature>
<feature type="helix" evidence="11">
    <location>
        <begin position="48"/>
        <end position="54"/>
    </location>
</feature>
<feature type="strand" evidence="11">
    <location>
        <begin position="58"/>
        <end position="61"/>
    </location>
</feature>
<feature type="strand" evidence="11">
    <location>
        <begin position="64"/>
        <end position="67"/>
    </location>
</feature>
<feature type="helix" evidence="11">
    <location>
        <begin position="75"/>
        <end position="78"/>
    </location>
</feature>
<feature type="turn" evidence="11">
    <location>
        <begin position="79"/>
        <end position="82"/>
    </location>
</feature>
<feature type="strand" evidence="11">
    <location>
        <begin position="84"/>
        <end position="87"/>
    </location>
</feature>
<feature type="helix" evidence="11">
    <location>
        <begin position="98"/>
        <end position="101"/>
    </location>
</feature>
<feature type="helix" evidence="11">
    <location>
        <begin position="102"/>
        <end position="114"/>
    </location>
</feature>
<feature type="turn" evidence="10">
    <location>
        <begin position="115"/>
        <end position="117"/>
    </location>
</feature>
<feature type="strand" evidence="11">
    <location>
        <begin position="120"/>
        <end position="123"/>
    </location>
</feature>
<feature type="strand" evidence="11">
    <location>
        <begin position="125"/>
        <end position="129"/>
    </location>
</feature>
<feature type="helix" evidence="11">
    <location>
        <begin position="130"/>
        <end position="143"/>
    </location>
</feature>
<feature type="helix" evidence="11">
    <location>
        <begin position="147"/>
        <end position="157"/>
    </location>
</feature>
<feature type="helix" evidence="11">
    <location>
        <begin position="164"/>
        <end position="178"/>
    </location>
</feature>
<keyword id="KW-0002">3D-structure</keyword>
<keyword id="KW-0025">Alternative splicing</keyword>
<keyword id="KW-0966">Cell projection</keyword>
<keyword id="KW-0969">Cilium</keyword>
<keyword id="KW-0963">Cytoplasm</keyword>
<keyword id="KW-0206">Cytoskeleton</keyword>
<keyword id="KW-0282">Flagellum</keyword>
<keyword id="KW-0378">Hydrolase</keyword>
<keyword id="KW-0539">Nucleus</keyword>
<keyword id="KW-0904">Protein phosphatase</keyword>
<keyword id="KW-1267">Proteomics identification</keyword>
<keyword id="KW-1185">Reference proteome</keyword>
<sequence>MSGSFELSVQDLNDLLSDGSGCYSLPSQPCNEVTPRIYVGNASVAQDIPKLQKLGITHVLNAAEGRSFMHVNTNANFYKDSGITYLGIKANDTQEFNLSAYFERAADFIDQALAQKNGRVLVHCREGYSRSPTLVIAYLMMRQKMDVKSALSIVRQNREIGPNDGFLAQLCQLNDRLAKEGKLKP</sequence>